<name>SYGB_LEVBA</name>
<sequence length="691" mass="75701">MAHTFLLEIGLEEMPAHVVTPAIKQLVKRTADYLKEERVDYDEIKPFSTPRRLAVLITGLADKQRDISESVKGPAKKIAQDAEGNWSKAAIGFTRGQGLTTDDITFKEIKGTEYVYVDKFIAGEPVATVLAGLKDVITAMTFPTMMKWSTHHFQYIRPIRWLVALLDADVIPFSILDVTTDRNTRGHRFLGKDISIATAADYEGDLTSEFVIADADKRKSMIKTQIDKLAADHGWTVNVDAGLLEEVNNLVEWPTAFAGSFDEKYLTIPEEVLITSMRDHQRFFYARDAQGQLLPTFISVRNGNDHDLQNVVSGNEKVLTARLEDAMFFYTEDQKKTIADYVERLKTVSFHDKISTMAEKMSRVKAIAGVLAKHVGLNDAQTKAVLRASEIYKFDLVTGMVGEFAELQGVMGEKYALLQGEDPAVAQAIREHYEPISADGALPASVPGAVLALADKFDSILTFFAAGMIPSGSNDPYALRRQATGIVRIAQDQQWSLPVADLAQAFVAAETTANVAPKLDQAGQIDALVNFIKDRIRKILRSAKQRHDIIDAVTAGSSSDVLQIFTAADILASHADDANFKDVIESLTRVIRLAQKAPAEVAATTVDPALFENDSEGQLHQGVATVATAAKDGLTALYTALADIQPVIAAYFDATMVMAKDDAVRNNRLAELSRLADLALALGDLDQLVVK</sequence>
<feature type="chain" id="PRO_1000101289" description="Glycine--tRNA ligase beta subunit">
    <location>
        <begin position="1"/>
        <end position="691"/>
    </location>
</feature>
<accession>Q03SC5</accession>
<keyword id="KW-0030">Aminoacyl-tRNA synthetase</keyword>
<keyword id="KW-0067">ATP-binding</keyword>
<keyword id="KW-0963">Cytoplasm</keyword>
<keyword id="KW-0436">Ligase</keyword>
<keyword id="KW-0547">Nucleotide-binding</keyword>
<keyword id="KW-0648">Protein biosynthesis</keyword>
<keyword id="KW-1185">Reference proteome</keyword>
<organism>
    <name type="scientific">Levilactobacillus brevis (strain ATCC 367 / BCRC 12310 / CIP 105137 / JCM 1170 / LMG 11437 / NCIMB 947 / NCTC 947)</name>
    <name type="common">Lactobacillus brevis</name>
    <dbReference type="NCBI Taxonomy" id="387344"/>
    <lineage>
        <taxon>Bacteria</taxon>
        <taxon>Bacillati</taxon>
        <taxon>Bacillota</taxon>
        <taxon>Bacilli</taxon>
        <taxon>Lactobacillales</taxon>
        <taxon>Lactobacillaceae</taxon>
        <taxon>Levilactobacillus</taxon>
    </lineage>
</organism>
<reference key="1">
    <citation type="journal article" date="2006" name="Proc. Natl. Acad. Sci. U.S.A.">
        <title>Comparative genomics of the lactic acid bacteria.</title>
        <authorList>
            <person name="Makarova K.S."/>
            <person name="Slesarev A."/>
            <person name="Wolf Y.I."/>
            <person name="Sorokin A."/>
            <person name="Mirkin B."/>
            <person name="Koonin E.V."/>
            <person name="Pavlov A."/>
            <person name="Pavlova N."/>
            <person name="Karamychev V."/>
            <person name="Polouchine N."/>
            <person name="Shakhova V."/>
            <person name="Grigoriev I."/>
            <person name="Lou Y."/>
            <person name="Rohksar D."/>
            <person name="Lucas S."/>
            <person name="Huang K."/>
            <person name="Goodstein D.M."/>
            <person name="Hawkins T."/>
            <person name="Plengvidhya V."/>
            <person name="Welker D."/>
            <person name="Hughes J."/>
            <person name="Goh Y."/>
            <person name="Benson A."/>
            <person name="Baldwin K."/>
            <person name="Lee J.-H."/>
            <person name="Diaz-Muniz I."/>
            <person name="Dosti B."/>
            <person name="Smeianov V."/>
            <person name="Wechter W."/>
            <person name="Barabote R."/>
            <person name="Lorca G."/>
            <person name="Altermann E."/>
            <person name="Barrangou R."/>
            <person name="Ganesan B."/>
            <person name="Xie Y."/>
            <person name="Rawsthorne H."/>
            <person name="Tamir D."/>
            <person name="Parker C."/>
            <person name="Breidt F."/>
            <person name="Broadbent J.R."/>
            <person name="Hutkins R."/>
            <person name="O'Sullivan D."/>
            <person name="Steele J."/>
            <person name="Unlu G."/>
            <person name="Saier M.H. Jr."/>
            <person name="Klaenhammer T."/>
            <person name="Richardson P."/>
            <person name="Kozyavkin S."/>
            <person name="Weimer B.C."/>
            <person name="Mills D.A."/>
        </authorList>
    </citation>
    <scope>NUCLEOTIDE SEQUENCE [LARGE SCALE GENOMIC DNA]</scope>
    <source>
        <strain>ATCC 367 / BCRC 12310 / CIP 105137 / JCM 1170 / LMG 11437 / NCIMB 947 / NCTC 947</strain>
    </source>
</reference>
<protein>
    <recommendedName>
        <fullName evidence="1">Glycine--tRNA ligase beta subunit</fullName>
        <ecNumber evidence="1">6.1.1.14</ecNumber>
    </recommendedName>
    <alternativeName>
        <fullName evidence="1">Glycyl-tRNA synthetase beta subunit</fullName>
        <shortName evidence="1">GlyRS</shortName>
    </alternativeName>
</protein>
<gene>
    <name evidence="1" type="primary">glyS</name>
    <name type="ordered locus">LVIS_0754</name>
</gene>
<comment type="catalytic activity">
    <reaction evidence="1">
        <text>tRNA(Gly) + glycine + ATP = glycyl-tRNA(Gly) + AMP + diphosphate</text>
        <dbReference type="Rhea" id="RHEA:16013"/>
        <dbReference type="Rhea" id="RHEA-COMP:9664"/>
        <dbReference type="Rhea" id="RHEA-COMP:9683"/>
        <dbReference type="ChEBI" id="CHEBI:30616"/>
        <dbReference type="ChEBI" id="CHEBI:33019"/>
        <dbReference type="ChEBI" id="CHEBI:57305"/>
        <dbReference type="ChEBI" id="CHEBI:78442"/>
        <dbReference type="ChEBI" id="CHEBI:78522"/>
        <dbReference type="ChEBI" id="CHEBI:456215"/>
        <dbReference type="EC" id="6.1.1.14"/>
    </reaction>
</comment>
<comment type="subunit">
    <text evidence="1">Tetramer of two alpha and two beta subunits.</text>
</comment>
<comment type="subcellular location">
    <subcellularLocation>
        <location evidence="1">Cytoplasm</location>
    </subcellularLocation>
</comment>
<comment type="similarity">
    <text evidence="1">Belongs to the class-II aminoacyl-tRNA synthetase family.</text>
</comment>
<dbReference type="EC" id="6.1.1.14" evidence="1"/>
<dbReference type="EMBL" id="CP000416">
    <property type="protein sequence ID" value="ABJ63897.1"/>
    <property type="molecule type" value="Genomic_DNA"/>
</dbReference>
<dbReference type="RefSeq" id="WP_011667528.1">
    <property type="nucleotide sequence ID" value="NC_008497.1"/>
</dbReference>
<dbReference type="SMR" id="Q03SC5"/>
<dbReference type="STRING" id="387344.LVIS_0754"/>
<dbReference type="KEGG" id="lbr:LVIS_0754"/>
<dbReference type="PATRIC" id="fig|387344.15.peg.727"/>
<dbReference type="eggNOG" id="COG0751">
    <property type="taxonomic scope" value="Bacteria"/>
</dbReference>
<dbReference type="HOGENOM" id="CLU_007220_2_2_9"/>
<dbReference type="Proteomes" id="UP000001652">
    <property type="component" value="Chromosome"/>
</dbReference>
<dbReference type="GO" id="GO:0005829">
    <property type="term" value="C:cytosol"/>
    <property type="evidence" value="ECO:0007669"/>
    <property type="project" value="TreeGrafter"/>
</dbReference>
<dbReference type="GO" id="GO:0005524">
    <property type="term" value="F:ATP binding"/>
    <property type="evidence" value="ECO:0007669"/>
    <property type="project" value="UniProtKB-UniRule"/>
</dbReference>
<dbReference type="GO" id="GO:0004820">
    <property type="term" value="F:glycine-tRNA ligase activity"/>
    <property type="evidence" value="ECO:0007669"/>
    <property type="project" value="UniProtKB-UniRule"/>
</dbReference>
<dbReference type="GO" id="GO:0006426">
    <property type="term" value="P:glycyl-tRNA aminoacylation"/>
    <property type="evidence" value="ECO:0007669"/>
    <property type="project" value="UniProtKB-UniRule"/>
</dbReference>
<dbReference type="HAMAP" id="MF_00255">
    <property type="entry name" value="Gly_tRNA_synth_beta"/>
    <property type="match status" value="1"/>
</dbReference>
<dbReference type="InterPro" id="IPR015944">
    <property type="entry name" value="Gly-tRNA-synth_bsu"/>
</dbReference>
<dbReference type="InterPro" id="IPR006194">
    <property type="entry name" value="Gly-tRNA-synth_heterodimer"/>
</dbReference>
<dbReference type="NCBIfam" id="TIGR00211">
    <property type="entry name" value="glyS"/>
    <property type="match status" value="1"/>
</dbReference>
<dbReference type="PANTHER" id="PTHR30075:SF2">
    <property type="entry name" value="GLYCINE--TRNA LIGASE, CHLOROPLASTIC_MITOCHONDRIAL 2"/>
    <property type="match status" value="1"/>
</dbReference>
<dbReference type="PANTHER" id="PTHR30075">
    <property type="entry name" value="GLYCYL-TRNA SYNTHETASE"/>
    <property type="match status" value="1"/>
</dbReference>
<dbReference type="Pfam" id="PF02092">
    <property type="entry name" value="tRNA_synt_2f"/>
    <property type="match status" value="1"/>
</dbReference>
<dbReference type="PRINTS" id="PR01045">
    <property type="entry name" value="TRNASYNTHGB"/>
</dbReference>
<dbReference type="SUPFAM" id="SSF109604">
    <property type="entry name" value="HD-domain/PDEase-like"/>
    <property type="match status" value="1"/>
</dbReference>
<dbReference type="PROSITE" id="PS50861">
    <property type="entry name" value="AA_TRNA_LIGASE_II_GLYAB"/>
    <property type="match status" value="1"/>
</dbReference>
<evidence type="ECO:0000255" key="1">
    <source>
        <dbReference type="HAMAP-Rule" id="MF_00255"/>
    </source>
</evidence>
<proteinExistence type="inferred from homology"/>